<keyword id="KW-0050">Antiport</keyword>
<keyword id="KW-0997">Cell inner membrane</keyword>
<keyword id="KW-1003">Cell membrane</keyword>
<keyword id="KW-0472">Membrane</keyword>
<keyword id="KW-0812">Transmembrane</keyword>
<keyword id="KW-1133">Transmembrane helix</keyword>
<keyword id="KW-0813">Transport</keyword>
<accession>B5RGA7</accession>
<comment type="function">
    <text evidence="1">Catalyzes the exchange of L-carnitine for gamma-butyrobetaine.</text>
</comment>
<comment type="catalytic activity">
    <reaction evidence="1">
        <text>4-(trimethylamino)butanoate(in) + (R)-carnitine(out) = 4-(trimethylamino)butanoate(out) + (R)-carnitine(in)</text>
        <dbReference type="Rhea" id="RHEA:29427"/>
        <dbReference type="ChEBI" id="CHEBI:16244"/>
        <dbReference type="ChEBI" id="CHEBI:16347"/>
    </reaction>
</comment>
<comment type="pathway">
    <text evidence="1">Amine and polyamine metabolism; carnitine metabolism.</text>
</comment>
<comment type="subunit">
    <text evidence="1">Homotrimer.</text>
</comment>
<comment type="subcellular location">
    <subcellularLocation>
        <location evidence="1">Cell inner membrane</location>
        <topology evidence="1">Multi-pass membrane protein</topology>
    </subcellularLocation>
</comment>
<comment type="similarity">
    <text evidence="1">Belongs to the BCCT transporter (TC 2.A.15) family. CaiT subfamily.</text>
</comment>
<evidence type="ECO:0000255" key="1">
    <source>
        <dbReference type="HAMAP-Rule" id="MF_01049"/>
    </source>
</evidence>
<sequence length="505" mass="56700">MKNEKKKSGIEPKVFFPPLIIVGILCWLTVRDLDAANVVINAVFSYVTNVWGWAFEWYMIVMLFGWFWLVFGPYAKKRLGDEKPEFSTASWIFMMFASCTSAAVLFWGSIEIYYYISTPPFGLEPNSTGAKEIGLAYSLFHWGPLPWATYSFLSVAFAYFFFVRKMDVIRPSSTLVPLVGEKHAKGLFGTIVDNFYLVALIFAMGTSLGLATPLVTECMQWLFGIPHTLQLDAIIITCWIILNAICVACGLQKGVRIASDVRSYLSFLMLGWVFIVSGASFIMNYFTDSVGMLLMHLPRMLFYTDAIGKGGFPQGWTVFYWAWWVIYAIQMSIFLARISRGRTVRELCFGMVMGLTASTWILWTVLGSNTLLLMDKNILNIPQLIEQHVVARAIIETWAALPLSTATMWGFFILCFIATVTLINACSYTLAMSTCREVRDGEEPPLLVRIGWSVLVGIIGIVLLALGGLKPIQTAIIAGGCPLFFVNIMVTLSFIKDAKVHWKDK</sequence>
<dbReference type="EMBL" id="AM933173">
    <property type="protein sequence ID" value="CAR35984.1"/>
    <property type="molecule type" value="Genomic_DNA"/>
</dbReference>
<dbReference type="RefSeq" id="WP_000787068.1">
    <property type="nucleotide sequence ID" value="NC_011274.1"/>
</dbReference>
<dbReference type="SMR" id="B5RGA7"/>
<dbReference type="KEGG" id="seg:SG0077"/>
<dbReference type="HOGENOM" id="CLU_010118_6_0_6"/>
<dbReference type="UniPathway" id="UPA00117"/>
<dbReference type="Proteomes" id="UP000008321">
    <property type="component" value="Chromosome"/>
</dbReference>
<dbReference type="GO" id="GO:0005886">
    <property type="term" value="C:plasma membrane"/>
    <property type="evidence" value="ECO:0007669"/>
    <property type="project" value="UniProtKB-SubCell"/>
</dbReference>
<dbReference type="GO" id="GO:0044667">
    <property type="term" value="F:(R)-carnitine:4-(trimethylammonio)butanoate antiporter activity"/>
    <property type="evidence" value="ECO:0007669"/>
    <property type="project" value="UniProtKB-UniRule"/>
</dbReference>
<dbReference type="GO" id="GO:1900751">
    <property type="term" value="P:4-(trimethylammonio)butanoate transport"/>
    <property type="evidence" value="ECO:0007669"/>
    <property type="project" value="InterPro"/>
</dbReference>
<dbReference type="GO" id="GO:0009437">
    <property type="term" value="P:carnitine metabolic process"/>
    <property type="evidence" value="ECO:0007669"/>
    <property type="project" value="UniProtKB-UniRule"/>
</dbReference>
<dbReference type="HAMAP" id="MF_01049">
    <property type="entry name" value="CaiT"/>
    <property type="match status" value="1"/>
</dbReference>
<dbReference type="InterPro" id="IPR018093">
    <property type="entry name" value="BCCT_CS"/>
</dbReference>
<dbReference type="InterPro" id="IPR000060">
    <property type="entry name" value="BCCT_transptr"/>
</dbReference>
<dbReference type="InterPro" id="IPR023449">
    <property type="entry name" value="BCCT_transptr_CaiT"/>
</dbReference>
<dbReference type="NCBIfam" id="TIGR00842">
    <property type="entry name" value="bcct"/>
    <property type="match status" value="1"/>
</dbReference>
<dbReference type="NCBIfam" id="NF002887">
    <property type="entry name" value="PRK03356.1"/>
    <property type="match status" value="1"/>
</dbReference>
<dbReference type="PANTHER" id="PTHR30047">
    <property type="entry name" value="HIGH-AFFINITY CHOLINE TRANSPORT PROTEIN-RELATED"/>
    <property type="match status" value="1"/>
</dbReference>
<dbReference type="PANTHER" id="PTHR30047:SF11">
    <property type="entry name" value="L-CARNITINE_GAMMA-BUTYROBETAINE ANTIPORTER"/>
    <property type="match status" value="1"/>
</dbReference>
<dbReference type="Pfam" id="PF02028">
    <property type="entry name" value="BCCT"/>
    <property type="match status" value="1"/>
</dbReference>
<dbReference type="PROSITE" id="PS01303">
    <property type="entry name" value="BCCT"/>
    <property type="match status" value="1"/>
</dbReference>
<gene>
    <name evidence="1" type="primary">caiT</name>
    <name type="ordered locus">SG0077</name>
</gene>
<protein>
    <recommendedName>
        <fullName evidence="1">L-carnitine/gamma-butyrobetaine antiporter</fullName>
    </recommendedName>
</protein>
<reference key="1">
    <citation type="journal article" date="2008" name="Genome Res.">
        <title>Comparative genome analysis of Salmonella enteritidis PT4 and Salmonella gallinarum 287/91 provides insights into evolutionary and host adaptation pathways.</title>
        <authorList>
            <person name="Thomson N.R."/>
            <person name="Clayton D.J."/>
            <person name="Windhorst D."/>
            <person name="Vernikos G."/>
            <person name="Davidson S."/>
            <person name="Churcher C."/>
            <person name="Quail M.A."/>
            <person name="Stevens M."/>
            <person name="Jones M.A."/>
            <person name="Watson M."/>
            <person name="Barron A."/>
            <person name="Layton A."/>
            <person name="Pickard D."/>
            <person name="Kingsley R.A."/>
            <person name="Bignell A."/>
            <person name="Clark L."/>
            <person name="Harris B."/>
            <person name="Ormond D."/>
            <person name="Abdellah Z."/>
            <person name="Brooks K."/>
            <person name="Cherevach I."/>
            <person name="Chillingworth T."/>
            <person name="Woodward J."/>
            <person name="Norberczak H."/>
            <person name="Lord A."/>
            <person name="Arrowsmith C."/>
            <person name="Jagels K."/>
            <person name="Moule S."/>
            <person name="Mungall K."/>
            <person name="Saunders M."/>
            <person name="Whitehead S."/>
            <person name="Chabalgoity J.A."/>
            <person name="Maskell D."/>
            <person name="Humphreys T."/>
            <person name="Roberts M."/>
            <person name="Barrow P.A."/>
            <person name="Dougan G."/>
            <person name="Parkhill J."/>
        </authorList>
    </citation>
    <scope>NUCLEOTIDE SEQUENCE [LARGE SCALE GENOMIC DNA]</scope>
    <source>
        <strain>287/91 / NCTC 13346</strain>
    </source>
</reference>
<feature type="chain" id="PRO_1000136240" description="L-carnitine/gamma-butyrobetaine antiporter">
    <location>
        <begin position="1"/>
        <end position="505"/>
    </location>
</feature>
<feature type="transmembrane region" description="Helical" evidence="1">
    <location>
        <begin position="10"/>
        <end position="30"/>
    </location>
</feature>
<feature type="transmembrane region" description="Helical" evidence="1">
    <location>
        <begin position="51"/>
        <end position="71"/>
    </location>
</feature>
<feature type="transmembrane region" description="Helical" evidence="1">
    <location>
        <begin position="92"/>
        <end position="112"/>
    </location>
</feature>
<feature type="transmembrane region" description="Helical" evidence="1">
    <location>
        <begin position="143"/>
        <end position="163"/>
    </location>
</feature>
<feature type="transmembrane region" description="Helical" evidence="1">
    <location>
        <begin position="195"/>
        <end position="215"/>
    </location>
</feature>
<feature type="transmembrane region" description="Helical" evidence="1">
    <location>
        <begin position="231"/>
        <end position="251"/>
    </location>
</feature>
<feature type="transmembrane region" description="Helical" evidence="1">
    <location>
        <begin position="263"/>
        <end position="283"/>
    </location>
</feature>
<feature type="transmembrane region" description="Helical" evidence="1">
    <location>
        <begin position="316"/>
        <end position="336"/>
    </location>
</feature>
<feature type="transmembrane region" description="Helical" evidence="1">
    <location>
        <begin position="347"/>
        <end position="367"/>
    </location>
</feature>
<feature type="transmembrane region" description="Helical" evidence="1">
    <location>
        <begin position="403"/>
        <end position="423"/>
    </location>
</feature>
<feature type="transmembrane region" description="Helical" evidence="1">
    <location>
        <begin position="446"/>
        <end position="466"/>
    </location>
</feature>
<feature type="transmembrane region" description="Helical" evidence="1">
    <location>
        <begin position="475"/>
        <end position="495"/>
    </location>
</feature>
<organism>
    <name type="scientific">Salmonella gallinarum (strain 287/91 / NCTC 13346)</name>
    <dbReference type="NCBI Taxonomy" id="550538"/>
    <lineage>
        <taxon>Bacteria</taxon>
        <taxon>Pseudomonadati</taxon>
        <taxon>Pseudomonadota</taxon>
        <taxon>Gammaproteobacteria</taxon>
        <taxon>Enterobacterales</taxon>
        <taxon>Enterobacteriaceae</taxon>
        <taxon>Salmonella</taxon>
    </lineage>
</organism>
<name>CAIT_SALG2</name>
<proteinExistence type="inferred from homology"/>